<proteinExistence type="inferred from homology"/>
<feature type="chain" id="PRO_0000294864" description="Small ribosomal subunit protein uS11">
    <location>
        <begin position="1"/>
        <end position="127"/>
    </location>
</feature>
<keyword id="KW-0687">Ribonucleoprotein</keyword>
<keyword id="KW-0689">Ribosomal protein</keyword>
<keyword id="KW-0694">RNA-binding</keyword>
<keyword id="KW-0699">rRNA-binding</keyword>
<protein>
    <recommendedName>
        <fullName evidence="1">Small ribosomal subunit protein uS11</fullName>
    </recommendedName>
    <alternativeName>
        <fullName evidence="2">30S ribosomal protein S11</fullName>
    </alternativeName>
</protein>
<organism>
    <name type="scientific">Streptococcus pyogenes serotype M12 (strain MGAS2096)</name>
    <dbReference type="NCBI Taxonomy" id="370553"/>
    <lineage>
        <taxon>Bacteria</taxon>
        <taxon>Bacillati</taxon>
        <taxon>Bacillota</taxon>
        <taxon>Bacilli</taxon>
        <taxon>Lactobacillales</taxon>
        <taxon>Streptococcaceae</taxon>
        <taxon>Streptococcus</taxon>
    </lineage>
</organism>
<name>RS11_STRPB</name>
<evidence type="ECO:0000255" key="1">
    <source>
        <dbReference type="HAMAP-Rule" id="MF_01310"/>
    </source>
</evidence>
<evidence type="ECO:0000305" key="2"/>
<reference key="1">
    <citation type="journal article" date="2006" name="Proc. Natl. Acad. Sci. U.S.A.">
        <title>Molecular genetic anatomy of inter- and intraserotype variation in the human bacterial pathogen group A Streptococcus.</title>
        <authorList>
            <person name="Beres S.B."/>
            <person name="Richter E.W."/>
            <person name="Nagiec M.J."/>
            <person name="Sumby P."/>
            <person name="Porcella S.F."/>
            <person name="DeLeo F.R."/>
            <person name="Musser J.M."/>
        </authorList>
    </citation>
    <scope>NUCLEOTIDE SEQUENCE [LARGE SCALE GENOMIC DNA]</scope>
    <source>
        <strain>MGAS2096</strain>
    </source>
</reference>
<dbReference type="EMBL" id="CP000261">
    <property type="protein sequence ID" value="ABF35124.1"/>
    <property type="molecule type" value="Genomic_DNA"/>
</dbReference>
<dbReference type="SMR" id="Q1JE34"/>
<dbReference type="KEGG" id="spj:MGAS2096_Spy0072"/>
<dbReference type="HOGENOM" id="CLU_072439_5_0_9"/>
<dbReference type="GO" id="GO:1990904">
    <property type="term" value="C:ribonucleoprotein complex"/>
    <property type="evidence" value="ECO:0007669"/>
    <property type="project" value="UniProtKB-KW"/>
</dbReference>
<dbReference type="GO" id="GO:0005840">
    <property type="term" value="C:ribosome"/>
    <property type="evidence" value="ECO:0007669"/>
    <property type="project" value="UniProtKB-KW"/>
</dbReference>
<dbReference type="GO" id="GO:0019843">
    <property type="term" value="F:rRNA binding"/>
    <property type="evidence" value="ECO:0007669"/>
    <property type="project" value="UniProtKB-UniRule"/>
</dbReference>
<dbReference type="GO" id="GO:0003735">
    <property type="term" value="F:structural constituent of ribosome"/>
    <property type="evidence" value="ECO:0007669"/>
    <property type="project" value="InterPro"/>
</dbReference>
<dbReference type="GO" id="GO:0006412">
    <property type="term" value="P:translation"/>
    <property type="evidence" value="ECO:0007669"/>
    <property type="project" value="UniProtKB-UniRule"/>
</dbReference>
<dbReference type="FunFam" id="3.30.420.80:FF:000001">
    <property type="entry name" value="30S ribosomal protein S11"/>
    <property type="match status" value="1"/>
</dbReference>
<dbReference type="Gene3D" id="3.30.420.80">
    <property type="entry name" value="Ribosomal protein S11"/>
    <property type="match status" value="1"/>
</dbReference>
<dbReference type="HAMAP" id="MF_01310">
    <property type="entry name" value="Ribosomal_uS11"/>
    <property type="match status" value="1"/>
</dbReference>
<dbReference type="InterPro" id="IPR001971">
    <property type="entry name" value="Ribosomal_uS11"/>
</dbReference>
<dbReference type="InterPro" id="IPR019981">
    <property type="entry name" value="Ribosomal_uS11_bac-type"/>
</dbReference>
<dbReference type="InterPro" id="IPR018102">
    <property type="entry name" value="Ribosomal_uS11_CS"/>
</dbReference>
<dbReference type="InterPro" id="IPR036967">
    <property type="entry name" value="Ribosomal_uS11_sf"/>
</dbReference>
<dbReference type="NCBIfam" id="NF003698">
    <property type="entry name" value="PRK05309.1"/>
    <property type="match status" value="1"/>
</dbReference>
<dbReference type="NCBIfam" id="TIGR03632">
    <property type="entry name" value="uS11_bact"/>
    <property type="match status" value="1"/>
</dbReference>
<dbReference type="PANTHER" id="PTHR11759">
    <property type="entry name" value="40S RIBOSOMAL PROTEIN S14/30S RIBOSOMAL PROTEIN S11"/>
    <property type="match status" value="1"/>
</dbReference>
<dbReference type="Pfam" id="PF00411">
    <property type="entry name" value="Ribosomal_S11"/>
    <property type="match status" value="1"/>
</dbReference>
<dbReference type="PIRSF" id="PIRSF002131">
    <property type="entry name" value="Ribosomal_S11"/>
    <property type="match status" value="1"/>
</dbReference>
<dbReference type="SUPFAM" id="SSF53137">
    <property type="entry name" value="Translational machinery components"/>
    <property type="match status" value="1"/>
</dbReference>
<dbReference type="PROSITE" id="PS00054">
    <property type="entry name" value="RIBOSOMAL_S11"/>
    <property type="match status" value="1"/>
</dbReference>
<gene>
    <name evidence="1" type="primary">rpsK</name>
    <name type="ordered locus">MGAS2096_Spy0072</name>
</gene>
<comment type="function">
    <text evidence="1">Located on the platform of the 30S subunit, it bridges several disparate RNA helices of the 16S rRNA. Forms part of the Shine-Dalgarno cleft in the 70S ribosome.</text>
</comment>
<comment type="subunit">
    <text evidence="1">Part of the 30S ribosomal subunit. Interacts with proteins S7 and S18. Binds to IF-3.</text>
</comment>
<comment type="similarity">
    <text evidence="1">Belongs to the universal ribosomal protein uS11 family.</text>
</comment>
<sequence>MAKPTRKRRVKKNIESGVAHIHATFNNTIVMITDVHGNALAWSSAGALGFKGSRKSTPFAAQMAAEAAAKSAQEHGLKTVEVTVKGPGSGRESAIRALAAAGLEVTAIRDVTPVPHNGARPPKRRRV</sequence>
<accession>Q1JE34</accession>